<accession>Q5JDH7</accession>
<evidence type="ECO:0000255" key="1">
    <source>
        <dbReference type="HAMAP-Rule" id="MF_00604"/>
    </source>
</evidence>
<organism>
    <name type="scientific">Thermococcus kodakarensis (strain ATCC BAA-918 / JCM 12380 / KOD1)</name>
    <name type="common">Pyrococcus kodakaraensis (strain KOD1)</name>
    <dbReference type="NCBI Taxonomy" id="69014"/>
    <lineage>
        <taxon>Archaea</taxon>
        <taxon>Methanobacteriati</taxon>
        <taxon>Methanobacteriota</taxon>
        <taxon>Thermococci</taxon>
        <taxon>Thermococcales</taxon>
        <taxon>Thermococcaceae</taxon>
        <taxon>Thermococcus</taxon>
    </lineage>
</organism>
<name>SUI1_THEKO</name>
<reference key="1">
    <citation type="journal article" date="2005" name="Genome Res.">
        <title>Complete genome sequence of the hyperthermophilic archaeon Thermococcus kodakaraensis KOD1 and comparison with Pyrococcus genomes.</title>
        <authorList>
            <person name="Fukui T."/>
            <person name="Atomi H."/>
            <person name="Kanai T."/>
            <person name="Matsumi R."/>
            <person name="Fujiwara S."/>
            <person name="Imanaka T."/>
        </authorList>
    </citation>
    <scope>NUCLEOTIDE SEQUENCE [LARGE SCALE GENOMIC DNA]</scope>
    <source>
        <strain>ATCC BAA-918 / JCM 12380 / KOD1</strain>
    </source>
</reference>
<comment type="similarity">
    <text evidence="1">Belongs to the SUI1 family.</text>
</comment>
<dbReference type="EMBL" id="AP006878">
    <property type="protein sequence ID" value="BAD85723.1"/>
    <property type="molecule type" value="Genomic_DNA"/>
</dbReference>
<dbReference type="SMR" id="Q5JDH7"/>
<dbReference type="FunCoup" id="Q5JDH7">
    <property type="interactions" value="83"/>
</dbReference>
<dbReference type="STRING" id="69014.TK1534"/>
<dbReference type="EnsemblBacteria" id="BAD85723">
    <property type="protein sequence ID" value="BAD85723"/>
    <property type="gene ID" value="TK1534"/>
</dbReference>
<dbReference type="KEGG" id="tko:TK1534"/>
<dbReference type="PATRIC" id="fig|69014.16.peg.1494"/>
<dbReference type="eggNOG" id="arCOG04223">
    <property type="taxonomic scope" value="Archaea"/>
</dbReference>
<dbReference type="HOGENOM" id="CLU_082805_6_1_2"/>
<dbReference type="InParanoid" id="Q5JDH7"/>
<dbReference type="OrthoDB" id="11182at2157"/>
<dbReference type="PhylomeDB" id="Q5JDH7"/>
<dbReference type="Proteomes" id="UP000000536">
    <property type="component" value="Chromosome"/>
</dbReference>
<dbReference type="GO" id="GO:0003743">
    <property type="term" value="F:translation initiation factor activity"/>
    <property type="evidence" value="ECO:0007669"/>
    <property type="project" value="InterPro"/>
</dbReference>
<dbReference type="GO" id="GO:0001731">
    <property type="term" value="P:formation of translation preinitiation complex"/>
    <property type="evidence" value="ECO:0000318"/>
    <property type="project" value="GO_Central"/>
</dbReference>
<dbReference type="GO" id="GO:0006417">
    <property type="term" value="P:regulation of translation"/>
    <property type="evidence" value="ECO:0007669"/>
    <property type="project" value="UniProtKB-UniRule"/>
</dbReference>
<dbReference type="GO" id="GO:0002188">
    <property type="term" value="P:translation reinitiation"/>
    <property type="evidence" value="ECO:0000318"/>
    <property type="project" value="GO_Central"/>
</dbReference>
<dbReference type="CDD" id="cd11567">
    <property type="entry name" value="YciH_like"/>
    <property type="match status" value="1"/>
</dbReference>
<dbReference type="FunFam" id="3.30.780.10:FF:000006">
    <property type="entry name" value="Protein translation factor SUI1 homolog"/>
    <property type="match status" value="1"/>
</dbReference>
<dbReference type="Gene3D" id="3.30.780.10">
    <property type="entry name" value="SUI1-like domain"/>
    <property type="match status" value="1"/>
</dbReference>
<dbReference type="HAMAP" id="MF_00604">
    <property type="entry name" value="SUI1"/>
    <property type="match status" value="1"/>
</dbReference>
<dbReference type="InterPro" id="IPR050318">
    <property type="entry name" value="DENR/SUI1_TIF"/>
</dbReference>
<dbReference type="InterPro" id="IPR001950">
    <property type="entry name" value="SUI1"/>
</dbReference>
<dbReference type="InterPro" id="IPR022851">
    <property type="entry name" value="SUI1_arc"/>
</dbReference>
<dbReference type="InterPro" id="IPR005872">
    <property type="entry name" value="SUI1_arc_bac"/>
</dbReference>
<dbReference type="InterPro" id="IPR036877">
    <property type="entry name" value="SUI1_dom_sf"/>
</dbReference>
<dbReference type="NCBIfam" id="NF002096">
    <property type="entry name" value="PRK00939.1"/>
    <property type="match status" value="1"/>
</dbReference>
<dbReference type="NCBIfam" id="TIGR01158">
    <property type="entry name" value="SUI1_rel"/>
    <property type="match status" value="1"/>
</dbReference>
<dbReference type="PANTHER" id="PTHR12789:SF0">
    <property type="entry name" value="DENSITY-REGULATED PROTEIN"/>
    <property type="match status" value="1"/>
</dbReference>
<dbReference type="PANTHER" id="PTHR12789">
    <property type="entry name" value="DENSITY-REGULATED PROTEIN HOMOLOG"/>
    <property type="match status" value="1"/>
</dbReference>
<dbReference type="Pfam" id="PF01253">
    <property type="entry name" value="SUI1"/>
    <property type="match status" value="1"/>
</dbReference>
<dbReference type="PIRSF" id="PIRSF037511">
    <property type="entry name" value="Transl_init_SUI1_pro"/>
    <property type="match status" value="1"/>
</dbReference>
<dbReference type="SUPFAM" id="SSF55159">
    <property type="entry name" value="eIF1-like"/>
    <property type="match status" value="1"/>
</dbReference>
<dbReference type="PROSITE" id="PS50296">
    <property type="entry name" value="SUI1"/>
    <property type="match status" value="1"/>
</dbReference>
<sequence>MPRIVNPLDEMLFKEVLKEQQRIRVYVERARYGKLKTIIEGIDEKEFDLEDIAKKLKAKLACGGTAKNGRIELQGDHRDRVKKLLAELGFSEELIEVE</sequence>
<gene>
    <name type="ordered locus">TK1534</name>
</gene>
<proteinExistence type="inferred from homology"/>
<feature type="chain" id="PRO_0000130591" description="Protein translation factor SUI1 homolog">
    <location>
        <begin position="1"/>
        <end position="98"/>
    </location>
</feature>
<protein>
    <recommendedName>
        <fullName evidence="1">Protein translation factor SUI1 homolog</fullName>
    </recommendedName>
</protein>
<keyword id="KW-0648">Protein biosynthesis</keyword>
<keyword id="KW-1185">Reference proteome</keyword>
<keyword id="KW-0810">Translation regulation</keyword>